<protein>
    <recommendedName>
        <fullName evidence="1 7">UDP-N-acetylmuramoylalanine--D-glutamate ligase</fullName>
        <ecNumber evidence="1 2">6.3.2.9</ecNumber>
    </recommendedName>
    <alternativeName>
        <fullName evidence="1 5">D-glutamic acid-adding enzyme</fullName>
    </alternativeName>
    <alternativeName>
        <fullName evidence="1">UDP-N-acetylmuramoyl-L-alanyl-D-glutamate synthetase</fullName>
    </alternativeName>
</protein>
<organism>
    <name type="scientific">Pseudomonas aeruginosa (strain ATCC 15692 / DSM 22644 / CIP 104116 / JCM 14847 / LMG 12228 / 1C / PRS 101 / PAO1)</name>
    <dbReference type="NCBI Taxonomy" id="208964"/>
    <lineage>
        <taxon>Bacteria</taxon>
        <taxon>Pseudomonadati</taxon>
        <taxon>Pseudomonadota</taxon>
        <taxon>Gammaproteobacteria</taxon>
        <taxon>Pseudomonadales</taxon>
        <taxon>Pseudomonadaceae</taxon>
        <taxon>Pseudomonas</taxon>
    </lineage>
</organism>
<feature type="chain" id="PRO_0000109062" description="UDP-N-acetylmuramoylalanine--D-glutamate ligase">
    <location>
        <begin position="1"/>
        <end position="448"/>
    </location>
</feature>
<feature type="binding site" evidence="4 9">
    <location>
        <position position="17"/>
    </location>
    <ligand>
        <name>UDP-N-acetyl-alpha-D-muramoyl-L-alanine</name>
        <dbReference type="ChEBI" id="CHEBI:83898"/>
    </ligand>
</feature>
<feature type="binding site" evidence="4 9">
    <location>
        <position position="18"/>
    </location>
    <ligand>
        <name>UDP-N-acetyl-alpha-D-muramoyl-L-alanine</name>
        <dbReference type="ChEBI" id="CHEBI:83898"/>
    </ligand>
</feature>
<feature type="binding site" evidence="4 9">
    <location>
        <position position="38"/>
    </location>
    <ligand>
        <name>UDP-N-acetyl-alpha-D-muramoyl-L-alanine</name>
        <dbReference type="ChEBI" id="CHEBI:83898"/>
    </ligand>
</feature>
<feature type="binding site" evidence="4 9">
    <location>
        <position position="39"/>
    </location>
    <ligand>
        <name>UDP-N-acetyl-alpha-D-muramoyl-L-alanine</name>
        <dbReference type="ChEBI" id="CHEBI:83898"/>
    </ligand>
</feature>
<feature type="binding site" evidence="4 9">
    <location>
        <position position="78"/>
    </location>
    <ligand>
        <name>UDP-N-acetyl-alpha-D-muramoyl-L-alanine</name>
        <dbReference type="ChEBI" id="CHEBI:83898"/>
    </ligand>
</feature>
<feature type="binding site" evidence="1">
    <location>
        <begin position="116"/>
        <end position="122"/>
    </location>
    <ligand>
        <name>ATP</name>
        <dbReference type="ChEBI" id="CHEBI:30616"/>
    </ligand>
</feature>
<feature type="binding site" evidence="3 9">
    <location>
        <position position="119"/>
    </location>
    <ligand>
        <name>ADP</name>
        <dbReference type="ChEBI" id="CHEBI:456216"/>
    </ligand>
</feature>
<feature type="binding site" evidence="3 9">
    <location>
        <position position="120"/>
    </location>
    <ligand>
        <name>ADP</name>
        <dbReference type="ChEBI" id="CHEBI:456216"/>
    </ligand>
</feature>
<feature type="binding site" evidence="3 9">
    <location>
        <position position="121"/>
    </location>
    <ligand>
        <name>ADP</name>
        <dbReference type="ChEBI" id="CHEBI:456216"/>
    </ligand>
</feature>
<feature type="binding site" evidence="3 9">
    <location>
        <position position="122"/>
    </location>
    <ligand>
        <name>ADP</name>
        <dbReference type="ChEBI" id="CHEBI:456216"/>
    </ligand>
</feature>
<feature type="binding site" evidence="4 9">
    <location>
        <position position="143"/>
    </location>
    <ligand>
        <name>UDP-N-acetyl-alpha-D-muramoyl-L-alanine</name>
        <dbReference type="ChEBI" id="CHEBI:83898"/>
    </ligand>
</feature>
<feature type="binding site" evidence="4 9">
    <location>
        <position position="188"/>
    </location>
    <ligand>
        <name>UDP-N-acetyl-alpha-D-muramoyl-L-alanine</name>
        <dbReference type="ChEBI" id="CHEBI:83898"/>
    </ligand>
</feature>
<feature type="binding site" evidence="3 9">
    <location>
        <position position="278"/>
    </location>
    <ligand>
        <name>ADP</name>
        <dbReference type="ChEBI" id="CHEBI:456216"/>
    </ligand>
</feature>
<feature type="binding site" evidence="3 9">
    <location>
        <position position="309"/>
    </location>
    <ligand>
        <name>ADP</name>
        <dbReference type="ChEBI" id="CHEBI:456216"/>
    </ligand>
</feature>
<feature type="binding site" evidence="3 9">
    <location>
        <position position="324"/>
    </location>
    <ligand>
        <name>ADP</name>
        <dbReference type="ChEBI" id="CHEBI:456216"/>
    </ligand>
</feature>
<feature type="binding site" evidence="3 9">
    <location>
        <position position="326"/>
    </location>
    <ligand>
        <name>ADP</name>
        <dbReference type="ChEBI" id="CHEBI:456216"/>
    </ligand>
</feature>
<feature type="sequence conflict" description="In Ref. 1; AAG45237." evidence="6" ref="1">
    <original>V</original>
    <variation>A</variation>
    <location>
        <position position="57"/>
    </location>
</feature>
<feature type="sequence conflict" description="In Ref. 1; AAG45237." evidence="6" ref="1">
    <original>D</original>
    <variation>G</variation>
    <location>
        <position position="260"/>
    </location>
</feature>
<feature type="strand" evidence="11">
    <location>
        <begin position="10"/>
        <end position="13"/>
    </location>
</feature>
<feature type="helix" evidence="11">
    <location>
        <begin position="17"/>
        <end position="28"/>
    </location>
</feature>
<feature type="strand" evidence="11">
    <location>
        <begin position="33"/>
        <end position="41"/>
    </location>
</feature>
<feature type="helix" evidence="11">
    <location>
        <begin position="45"/>
        <end position="51"/>
    </location>
</feature>
<feature type="strand" evidence="11">
    <location>
        <begin position="57"/>
        <end position="61"/>
    </location>
</feature>
<feature type="helix" evidence="11">
    <location>
        <begin position="64"/>
        <end position="67"/>
    </location>
</feature>
<feature type="strand" evidence="11">
    <location>
        <begin position="70"/>
        <end position="75"/>
    </location>
</feature>
<feature type="helix" evidence="11">
    <location>
        <begin position="84"/>
        <end position="91"/>
    </location>
</feature>
<feature type="strand" evidence="11">
    <location>
        <begin position="95"/>
        <end position="97"/>
    </location>
</feature>
<feature type="helix" evidence="11">
    <location>
        <begin position="99"/>
        <end position="106"/>
    </location>
</feature>
<feature type="strand" evidence="11">
    <location>
        <begin position="111"/>
        <end position="115"/>
    </location>
</feature>
<feature type="strand" evidence="11">
    <location>
        <begin position="117"/>
        <end position="119"/>
    </location>
</feature>
<feature type="helix" evidence="11">
    <location>
        <begin position="120"/>
        <end position="133"/>
    </location>
</feature>
<feature type="strand" evidence="11">
    <location>
        <begin position="138"/>
        <end position="142"/>
    </location>
</feature>
<feature type="helix" evidence="11">
    <location>
        <begin position="148"/>
        <end position="151"/>
    </location>
</feature>
<feature type="strand" evidence="11">
    <location>
        <begin position="158"/>
        <end position="162"/>
    </location>
</feature>
<feature type="helix" evidence="11">
    <location>
        <begin position="165"/>
        <end position="168"/>
    </location>
</feature>
<feature type="strand" evidence="11">
    <location>
        <begin position="177"/>
        <end position="181"/>
    </location>
</feature>
<feature type="turn" evidence="11">
    <location>
        <begin position="189"/>
        <end position="191"/>
    </location>
</feature>
<feature type="strand" evidence="11">
    <location>
        <begin position="192"/>
        <end position="194"/>
    </location>
</feature>
<feature type="helix" evidence="11">
    <location>
        <begin position="195"/>
        <end position="203"/>
    </location>
</feature>
<feature type="helix" evidence="11">
    <location>
        <begin position="204"/>
        <end position="206"/>
    </location>
</feature>
<feature type="strand" evidence="11">
    <location>
        <begin position="210"/>
        <end position="215"/>
    </location>
</feature>
<feature type="helix" evidence="11">
    <location>
        <begin position="219"/>
        <end position="221"/>
    </location>
</feature>
<feature type="helix" evidence="11">
    <location>
        <begin position="224"/>
        <end position="227"/>
    </location>
</feature>
<feature type="strand" evidence="11">
    <location>
        <begin position="231"/>
        <end position="234"/>
    </location>
</feature>
<feature type="strand" evidence="11">
    <location>
        <begin position="243"/>
        <end position="249"/>
    </location>
</feature>
<feature type="strand" evidence="11">
    <location>
        <begin position="252"/>
        <end position="257"/>
    </location>
</feature>
<feature type="strand" evidence="11">
    <location>
        <begin position="260"/>
        <end position="264"/>
    </location>
</feature>
<feature type="helix" evidence="11">
    <location>
        <begin position="265"/>
        <end position="267"/>
    </location>
</feature>
<feature type="helix" evidence="11">
    <location>
        <begin position="273"/>
        <end position="288"/>
    </location>
</feature>
<feature type="helix" evidence="11">
    <location>
        <begin position="293"/>
        <end position="302"/>
    </location>
</feature>
<feature type="strand" evidence="11">
    <location>
        <begin position="309"/>
        <end position="316"/>
    </location>
</feature>
<feature type="strand" evidence="11">
    <location>
        <begin position="319"/>
        <end position="323"/>
    </location>
</feature>
<feature type="helix" evidence="11">
    <location>
        <begin position="330"/>
        <end position="343"/>
    </location>
</feature>
<feature type="strand" evidence="11">
    <location>
        <begin position="344"/>
        <end position="346"/>
    </location>
</feature>
<feature type="strand" evidence="11">
    <location>
        <begin position="348"/>
        <end position="355"/>
    </location>
</feature>
<feature type="helix" evidence="11">
    <location>
        <begin position="362"/>
        <end position="364"/>
    </location>
</feature>
<feature type="helix" evidence="11">
    <location>
        <begin position="365"/>
        <end position="371"/>
    </location>
</feature>
<feature type="strand" evidence="11">
    <location>
        <begin position="372"/>
        <end position="379"/>
    </location>
</feature>
<feature type="helix" evidence="11">
    <location>
        <begin position="382"/>
        <end position="389"/>
    </location>
</feature>
<feature type="strand" evidence="10">
    <location>
        <begin position="391"/>
        <end position="393"/>
    </location>
</feature>
<feature type="strand" evidence="11">
    <location>
        <begin position="395"/>
        <end position="397"/>
    </location>
</feature>
<feature type="helix" evidence="11">
    <location>
        <begin position="401"/>
        <end position="411"/>
    </location>
</feature>
<feature type="strand" evidence="11">
    <location>
        <begin position="417"/>
        <end position="420"/>
    </location>
</feature>
<feature type="strand" evidence="11">
    <location>
        <begin position="423"/>
        <end position="426"/>
    </location>
</feature>
<feature type="turn" evidence="11">
    <location>
        <begin position="427"/>
        <end position="429"/>
    </location>
</feature>
<feature type="strand" evidence="11">
    <location>
        <begin position="430"/>
        <end position="432"/>
    </location>
</feature>
<feature type="helix" evidence="11">
    <location>
        <begin position="433"/>
        <end position="446"/>
    </location>
</feature>
<gene>
    <name evidence="1 5" type="primary">murD</name>
    <name type="ordered locus">PA4414</name>
</gene>
<accession>Q9HVZ9</accession>
<accession>Q9EY46</accession>
<comment type="function">
    <text evidence="2">Involved in cell wall formation. Catalyzes the addition of D-glutamate to the peptidoglycan precursor UDP-N-acetylmuramoyl-L-alanine (UMA).</text>
</comment>
<comment type="catalytic activity">
    <reaction evidence="1 2">
        <text>UDP-N-acetyl-alpha-D-muramoyl-L-alanine + D-glutamate + ATP = UDP-N-acetyl-alpha-D-muramoyl-L-alanyl-D-glutamate + ADP + phosphate + H(+)</text>
        <dbReference type="Rhea" id="RHEA:16429"/>
        <dbReference type="ChEBI" id="CHEBI:15378"/>
        <dbReference type="ChEBI" id="CHEBI:29986"/>
        <dbReference type="ChEBI" id="CHEBI:30616"/>
        <dbReference type="ChEBI" id="CHEBI:43474"/>
        <dbReference type="ChEBI" id="CHEBI:83898"/>
        <dbReference type="ChEBI" id="CHEBI:83900"/>
        <dbReference type="ChEBI" id="CHEBI:456216"/>
        <dbReference type="EC" id="6.3.2.9"/>
    </reaction>
    <physiologicalReaction direction="left-to-right" evidence="7">
        <dbReference type="Rhea" id="RHEA:16430"/>
    </physiologicalReaction>
</comment>
<comment type="pathway">
    <text evidence="1">Cell wall biogenesis; peptidoglycan biosynthesis.</text>
</comment>
<comment type="subcellular location">
    <subcellularLocation>
        <location evidence="1">Cytoplasm</location>
    </subcellularLocation>
</comment>
<comment type="similarity">
    <text evidence="1">Belongs to the MurCDEF family.</text>
</comment>
<evidence type="ECO:0000255" key="1">
    <source>
        <dbReference type="HAMAP-Rule" id="MF_00639"/>
    </source>
</evidence>
<evidence type="ECO:0000269" key="2">
    <source>
    </source>
</evidence>
<evidence type="ECO:0000269" key="3">
    <source ref="4"/>
</evidence>
<evidence type="ECO:0000269" key="4">
    <source ref="5"/>
</evidence>
<evidence type="ECO:0000303" key="5">
    <source>
    </source>
</evidence>
<evidence type="ECO:0000305" key="6"/>
<evidence type="ECO:0000305" key="7">
    <source>
    </source>
</evidence>
<evidence type="ECO:0007744" key="8">
    <source>
        <dbReference type="PDB" id="7SY9"/>
    </source>
</evidence>
<evidence type="ECO:0007744" key="9">
    <source>
        <dbReference type="PDB" id="7U35"/>
    </source>
</evidence>
<evidence type="ECO:0007829" key="10">
    <source>
        <dbReference type="PDB" id="7SY9"/>
    </source>
</evidence>
<evidence type="ECO:0007829" key="11">
    <source>
        <dbReference type="PDB" id="8DP2"/>
    </source>
</evidence>
<name>MURD_PSEAE</name>
<keyword id="KW-0002">3D-structure</keyword>
<keyword id="KW-0067">ATP-binding</keyword>
<keyword id="KW-0131">Cell cycle</keyword>
<keyword id="KW-0132">Cell division</keyword>
<keyword id="KW-0133">Cell shape</keyword>
<keyword id="KW-0961">Cell wall biogenesis/degradation</keyword>
<keyword id="KW-0963">Cytoplasm</keyword>
<keyword id="KW-0436">Ligase</keyword>
<keyword id="KW-0547">Nucleotide-binding</keyword>
<keyword id="KW-0573">Peptidoglycan synthesis</keyword>
<keyword id="KW-1185">Reference proteome</keyword>
<sequence length="448" mass="48080">MSLIASDHFRIVVGLGKSGMSLVRYLARRGLPFAVVDTRENPPELATLRAQYPQVEVRCGELDAEFLCSARELYVSPGLSLRTPALVQAAAKGVRISGDIDLFAREAKAPIVAITGSNAKSTVTTLVGEMAVAADKRVAVGGNLGTPALDLLADDIELYVLELSSFQLETCDRLNAEVATVLNVSEDHMDRYDGMADYHLAKHRIFRGARQVVVNRADALTRPLIADTVPCWSFGLNKPDFKAFGLIEEDGQKWLAFQFDKLLPVGELKIRGAHNYSNALAALALGHAVGLPFDAMLGALKAFSGLAHRCQWVRERQGVSYYDDSKATNVGAALAAIEGLGADIDGKLVLLAGGDGKGADFHDLREPVARFCRAVVLLGRDAGLIAQALGNAVPLVRVATLDEAVRQAAELAREGDAVLLSPACASLDMFKNFEERGRLFAKAVEELA</sequence>
<proteinExistence type="evidence at protein level"/>
<dbReference type="EC" id="6.3.2.9" evidence="1 2"/>
<dbReference type="EMBL" id="AY008276">
    <property type="protein sequence ID" value="AAG45237.1"/>
    <property type="molecule type" value="Genomic_DNA"/>
</dbReference>
<dbReference type="EMBL" id="AE004091">
    <property type="protein sequence ID" value="AAG07802.1"/>
    <property type="molecule type" value="Genomic_DNA"/>
</dbReference>
<dbReference type="PIR" id="G83094">
    <property type="entry name" value="G83094"/>
</dbReference>
<dbReference type="RefSeq" id="NP_253104.1">
    <property type="nucleotide sequence ID" value="NC_002516.2"/>
</dbReference>
<dbReference type="RefSeq" id="WP_003103104.1">
    <property type="nucleotide sequence ID" value="NZ_QZGE01000004.1"/>
</dbReference>
<dbReference type="PDB" id="7SY9">
    <property type="method" value="X-ray"/>
    <property type="resolution" value="1.95 A"/>
    <property type="chains" value="A/B=8-448"/>
</dbReference>
<dbReference type="PDB" id="7U35">
    <property type="method" value="X-ray"/>
    <property type="resolution" value="1.95 A"/>
    <property type="chains" value="A/B/C=8-448"/>
</dbReference>
<dbReference type="PDB" id="8DP2">
    <property type="method" value="X-ray"/>
    <property type="resolution" value="1.60 A"/>
    <property type="chains" value="A=9-448"/>
</dbReference>
<dbReference type="PDBsum" id="7SY9"/>
<dbReference type="PDBsum" id="7U35"/>
<dbReference type="PDBsum" id="8DP2"/>
<dbReference type="SMR" id="Q9HVZ9"/>
<dbReference type="FunCoup" id="Q9HVZ9">
    <property type="interactions" value="626"/>
</dbReference>
<dbReference type="STRING" id="208964.PA4414"/>
<dbReference type="PaxDb" id="208964-PA4414"/>
<dbReference type="GeneID" id="881268"/>
<dbReference type="KEGG" id="pae:PA4414"/>
<dbReference type="PATRIC" id="fig|208964.12.peg.4623"/>
<dbReference type="PseudoCAP" id="PA4414"/>
<dbReference type="HOGENOM" id="CLU_032540_1_0_6"/>
<dbReference type="InParanoid" id="Q9HVZ9"/>
<dbReference type="OrthoDB" id="9809796at2"/>
<dbReference type="PhylomeDB" id="Q9HVZ9"/>
<dbReference type="BioCyc" id="PAER208964:G1FZ6-4501-MONOMER"/>
<dbReference type="UniPathway" id="UPA00219"/>
<dbReference type="PHI-base" id="PHI:7631"/>
<dbReference type="Proteomes" id="UP000002438">
    <property type="component" value="Chromosome"/>
</dbReference>
<dbReference type="GO" id="GO:0005737">
    <property type="term" value="C:cytoplasm"/>
    <property type="evidence" value="ECO:0007669"/>
    <property type="project" value="UniProtKB-SubCell"/>
</dbReference>
<dbReference type="GO" id="GO:0005524">
    <property type="term" value="F:ATP binding"/>
    <property type="evidence" value="ECO:0007669"/>
    <property type="project" value="UniProtKB-UniRule"/>
</dbReference>
<dbReference type="GO" id="GO:0008764">
    <property type="term" value="F:UDP-N-acetylmuramoylalanine-D-glutamate ligase activity"/>
    <property type="evidence" value="ECO:0007669"/>
    <property type="project" value="UniProtKB-UniRule"/>
</dbReference>
<dbReference type="GO" id="GO:0051301">
    <property type="term" value="P:cell division"/>
    <property type="evidence" value="ECO:0007669"/>
    <property type="project" value="UniProtKB-KW"/>
</dbReference>
<dbReference type="GO" id="GO:0071555">
    <property type="term" value="P:cell wall organization"/>
    <property type="evidence" value="ECO:0007669"/>
    <property type="project" value="UniProtKB-KW"/>
</dbReference>
<dbReference type="GO" id="GO:0009252">
    <property type="term" value="P:peptidoglycan biosynthetic process"/>
    <property type="evidence" value="ECO:0007669"/>
    <property type="project" value="UniProtKB-UniRule"/>
</dbReference>
<dbReference type="GO" id="GO:0008360">
    <property type="term" value="P:regulation of cell shape"/>
    <property type="evidence" value="ECO:0007669"/>
    <property type="project" value="UniProtKB-KW"/>
</dbReference>
<dbReference type="Gene3D" id="3.90.190.20">
    <property type="entry name" value="Mur ligase, C-terminal domain"/>
    <property type="match status" value="1"/>
</dbReference>
<dbReference type="Gene3D" id="3.40.1190.10">
    <property type="entry name" value="Mur-like, catalytic domain"/>
    <property type="match status" value="1"/>
</dbReference>
<dbReference type="Gene3D" id="3.40.50.720">
    <property type="entry name" value="NAD(P)-binding Rossmann-like Domain"/>
    <property type="match status" value="1"/>
</dbReference>
<dbReference type="HAMAP" id="MF_00639">
    <property type="entry name" value="MurD"/>
    <property type="match status" value="1"/>
</dbReference>
<dbReference type="InterPro" id="IPR036565">
    <property type="entry name" value="Mur-like_cat_sf"/>
</dbReference>
<dbReference type="InterPro" id="IPR004101">
    <property type="entry name" value="Mur_ligase_C"/>
</dbReference>
<dbReference type="InterPro" id="IPR036615">
    <property type="entry name" value="Mur_ligase_C_dom_sf"/>
</dbReference>
<dbReference type="InterPro" id="IPR013221">
    <property type="entry name" value="Mur_ligase_cen"/>
</dbReference>
<dbReference type="InterPro" id="IPR005762">
    <property type="entry name" value="MurD"/>
</dbReference>
<dbReference type="NCBIfam" id="TIGR01087">
    <property type="entry name" value="murD"/>
    <property type="match status" value="1"/>
</dbReference>
<dbReference type="PANTHER" id="PTHR43692">
    <property type="entry name" value="UDP-N-ACETYLMURAMOYLALANINE--D-GLUTAMATE LIGASE"/>
    <property type="match status" value="1"/>
</dbReference>
<dbReference type="PANTHER" id="PTHR43692:SF1">
    <property type="entry name" value="UDP-N-ACETYLMURAMOYLALANINE--D-GLUTAMATE LIGASE"/>
    <property type="match status" value="1"/>
</dbReference>
<dbReference type="Pfam" id="PF02875">
    <property type="entry name" value="Mur_ligase_C"/>
    <property type="match status" value="1"/>
</dbReference>
<dbReference type="Pfam" id="PF08245">
    <property type="entry name" value="Mur_ligase_M"/>
    <property type="match status" value="1"/>
</dbReference>
<dbReference type="Pfam" id="PF21799">
    <property type="entry name" value="MurD-like_N"/>
    <property type="match status" value="1"/>
</dbReference>
<dbReference type="SUPFAM" id="SSF51984">
    <property type="entry name" value="MurCD N-terminal domain"/>
    <property type="match status" value="1"/>
</dbReference>
<dbReference type="SUPFAM" id="SSF53623">
    <property type="entry name" value="MurD-like peptide ligases, catalytic domain"/>
    <property type="match status" value="1"/>
</dbReference>
<dbReference type="SUPFAM" id="SSF53244">
    <property type="entry name" value="MurD-like peptide ligases, peptide-binding domain"/>
    <property type="match status" value="1"/>
</dbReference>
<reference key="1">
    <citation type="journal article" date="2001" name="Protein Expr. Purif.">
        <title>The cell wall and cell division gene cluster in the Mra operon of Pseudomonas aeruginosa: cloning, production, and purification of active enzymes.</title>
        <authorList>
            <person name="Azzolina B.A."/>
            <person name="Yuan X."/>
            <person name="Anderson M.S."/>
            <person name="El-Sherbeini M."/>
        </authorList>
    </citation>
    <scope>NUCLEOTIDE SEQUENCE [GENOMIC DNA]</scope>
    <scope>FUNCTION</scope>
    <scope>CATALYTIC ACTIVITY</scope>
    <source>
        <strain>ATCC 15692 / DSM 22644 / CIP 104116 / JCM 14847 / LMG 12228 / 1C / PRS 101 / PAO1</strain>
    </source>
</reference>
<reference key="2">
    <citation type="journal article" date="2000" name="Nature">
        <title>Complete genome sequence of Pseudomonas aeruginosa PAO1, an opportunistic pathogen.</title>
        <authorList>
            <person name="Stover C.K."/>
            <person name="Pham X.-Q.T."/>
            <person name="Erwin A.L."/>
            <person name="Mizoguchi S.D."/>
            <person name="Warrener P."/>
            <person name="Hickey M.J."/>
            <person name="Brinkman F.S.L."/>
            <person name="Hufnagle W.O."/>
            <person name="Kowalik D.J."/>
            <person name="Lagrou M."/>
            <person name="Garber R.L."/>
            <person name="Goltry L."/>
            <person name="Tolentino E."/>
            <person name="Westbrock-Wadman S."/>
            <person name="Yuan Y."/>
            <person name="Brody L.L."/>
            <person name="Coulter S.N."/>
            <person name="Folger K.R."/>
            <person name="Kas A."/>
            <person name="Larbig K."/>
            <person name="Lim R.M."/>
            <person name="Smith K.A."/>
            <person name="Spencer D.H."/>
            <person name="Wong G.K.-S."/>
            <person name="Wu Z."/>
            <person name="Paulsen I.T."/>
            <person name="Reizer J."/>
            <person name="Saier M.H. Jr."/>
            <person name="Hancock R.E.W."/>
            <person name="Lory S."/>
            <person name="Olson M.V."/>
        </authorList>
    </citation>
    <scope>NUCLEOTIDE SEQUENCE [LARGE SCALE GENOMIC DNA]</scope>
    <source>
        <strain>ATCC 15692 / DSM 22644 / CIP 104116 / JCM 14847 / LMG 12228 / 1C / PRS 101 / PAO1</strain>
    </source>
</reference>
<reference evidence="8" key="3">
    <citation type="submission" date="2021-12" db="PDB data bank">
        <title>Crystal Structure of UDP-N-acetylmuramoylalanine--D-glutamate ligase (MurD) from Pseudomonas aeruginosa PAO1.</title>
        <authorList>
            <consortium name="Seattle structural genomics center for infectious disease (SSGCID)"/>
        </authorList>
    </citation>
    <scope>X-RAY CRYSTALLOGRAPHY (2.75 ANGSTROMS) OF 8-448</scope>
</reference>
<reference evidence="9" key="4">
    <citation type="submission" date="2022-03" db="PDB data bank">
        <title>Crystal structure of UDP-N-acetylmuramoylalanine--D-glutamate ligase (MurD) from Pseudomonas aeruginosa PAO1 in complex with ADP.</title>
        <authorList>
            <consortium name="Seattle structural genomics center for infectious disease (SSGCID)"/>
        </authorList>
    </citation>
    <scope>X-RAY CRYSTALLOGRAPHY (1.95 ANGSTROMS) OF 8-448 IN COMPLEX WITH ADP</scope>
</reference>
<reference evidence="9" key="5">
    <citation type="submission" date="2022-08" db="PDB data bank">
        <title>Crystal Structure of UDP-N-acetylmuramoylalanine--D-glutamate ligase (MurD) from Pseudomonas aeruginosa PAO1 in complex with UMA (Uridine-5'-diphosphate-N-acetylmuramoyl-L-Alanine).</title>
        <authorList>
            <consortium name="Seattle structural genomics center for infectious disease (SSGCID)"/>
        </authorList>
    </citation>
    <scope>X-RAY CRYSTALLOGRAPHY (1.6 ANGSTROMS) OF 9-448 IN COMPLEX WITH UMA</scope>
</reference>